<comment type="subcellular location">
    <subcellularLocation>
        <location>Secreted</location>
    </subcellularLocation>
</comment>
<comment type="domain">
    <text>Avian ovomucoid consists of three homologous, tandem Kazal family inhibitory domains.</text>
</comment>
<protein>
    <recommendedName>
        <fullName>Ovomucoid</fullName>
    </recommendedName>
</protein>
<reference key="1">
    <citation type="journal article" date="1987" name="Biochemistry">
        <title>Ovomucoid third domains from 100 avian species: isolation, sequences, and hypervariability of enzyme-inhibitor contact residues.</title>
        <authorList>
            <person name="Laskowski M. Jr."/>
            <person name="Kato I."/>
            <person name="Ardelt W."/>
            <person name="Cook J."/>
            <person name="Denton A."/>
            <person name="Empie M.W."/>
            <person name="Kohr W.J."/>
            <person name="Park S.J."/>
            <person name="Parks K."/>
            <person name="Schatzley B.L."/>
            <person name="Schoenberger O.L."/>
            <person name="Tashiro M."/>
            <person name="Vichot G."/>
            <person name="Whatley H.E."/>
            <person name="Wieczorek A."/>
            <person name="Wieczorek M."/>
        </authorList>
    </citation>
    <scope>PROTEIN SEQUENCE</scope>
</reference>
<keyword id="KW-0903">Direct protein sequencing</keyword>
<keyword id="KW-1015">Disulfide bond</keyword>
<keyword id="KW-0325">Glycoprotein</keyword>
<keyword id="KW-0646">Protease inhibitor</keyword>
<keyword id="KW-1185">Reference proteome</keyword>
<keyword id="KW-0677">Repeat</keyword>
<keyword id="KW-0964">Secreted</keyword>
<keyword id="KW-0722">Serine protease inhibitor</keyword>
<evidence type="ECO:0000255" key="1">
    <source>
        <dbReference type="PROSITE-ProRule" id="PRU00798"/>
    </source>
</evidence>
<name>IOVO_CHRPC</name>
<proteinExistence type="evidence at protein level"/>
<dbReference type="PIR" id="F31445">
    <property type="entry name" value="F31445"/>
</dbReference>
<dbReference type="SMR" id="P68127"/>
<dbReference type="Proteomes" id="UP000694543">
    <property type="component" value="Unplaced"/>
</dbReference>
<dbReference type="GO" id="GO:0005615">
    <property type="term" value="C:extracellular space"/>
    <property type="evidence" value="ECO:0007669"/>
    <property type="project" value="UniProtKB-ARBA"/>
</dbReference>
<dbReference type="GO" id="GO:0004867">
    <property type="term" value="F:serine-type endopeptidase inhibitor activity"/>
    <property type="evidence" value="ECO:0007669"/>
    <property type="project" value="UniProtKB-KW"/>
</dbReference>
<dbReference type="CDD" id="cd00104">
    <property type="entry name" value="KAZAL_FS"/>
    <property type="match status" value="1"/>
</dbReference>
<dbReference type="FunFam" id="3.30.60.30:FF:000037">
    <property type="entry name" value="Ovomucoid"/>
    <property type="match status" value="1"/>
</dbReference>
<dbReference type="Gene3D" id="3.30.60.30">
    <property type="match status" value="1"/>
</dbReference>
<dbReference type="InterPro" id="IPR051597">
    <property type="entry name" value="Bifunctional_prot_inhibitor"/>
</dbReference>
<dbReference type="InterPro" id="IPR002350">
    <property type="entry name" value="Kazal_dom"/>
</dbReference>
<dbReference type="InterPro" id="IPR036058">
    <property type="entry name" value="Kazal_dom_sf"/>
</dbReference>
<dbReference type="InterPro" id="IPR001239">
    <property type="entry name" value="Prot_inh_Kazal-m"/>
</dbReference>
<dbReference type="PANTHER" id="PTHR47729:SF1">
    <property type="entry name" value="OVOMUCOID-LIKE-RELATED"/>
    <property type="match status" value="1"/>
</dbReference>
<dbReference type="PANTHER" id="PTHR47729">
    <property type="entry name" value="SERINE PEPTIDASE INHIBITOR, KAZAL TYPE 2, TANDEM DUPLICATE 1-RELATED"/>
    <property type="match status" value="1"/>
</dbReference>
<dbReference type="Pfam" id="PF00050">
    <property type="entry name" value="Kazal_1"/>
    <property type="match status" value="1"/>
</dbReference>
<dbReference type="PRINTS" id="PR00290">
    <property type="entry name" value="KAZALINHBTR"/>
</dbReference>
<dbReference type="SMART" id="SM00280">
    <property type="entry name" value="KAZAL"/>
    <property type="match status" value="1"/>
</dbReference>
<dbReference type="SUPFAM" id="SSF100895">
    <property type="entry name" value="Kazal-type serine protease inhibitors"/>
    <property type="match status" value="1"/>
</dbReference>
<dbReference type="PROSITE" id="PS00282">
    <property type="entry name" value="KAZAL_1"/>
    <property type="match status" value="1"/>
</dbReference>
<dbReference type="PROSITE" id="PS51465">
    <property type="entry name" value="KAZAL_2"/>
    <property type="match status" value="1"/>
</dbReference>
<feature type="chain" id="PRO_0000073084" description="Ovomucoid">
    <location>
        <begin position="1" status="less than"/>
        <end position="56" status="greater than"/>
    </location>
</feature>
<feature type="domain" description="Kazal-like" evidence="1">
    <location>
        <begin position="6"/>
        <end position="56"/>
    </location>
</feature>
<feature type="site" description="Reactive bond 3">
    <location>
        <begin position="18"/>
        <end position="19"/>
    </location>
</feature>
<feature type="glycosylation site" description="N-linked (GlcNAc...) asparagine">
    <location>
        <position position="45"/>
    </location>
</feature>
<feature type="disulfide bond">
    <location>
        <begin position="8"/>
        <end position="38"/>
    </location>
</feature>
<feature type="disulfide bond">
    <location>
        <begin position="16"/>
        <end position="35"/>
    </location>
</feature>
<feature type="disulfide bond">
    <location>
        <begin position="24"/>
        <end position="56"/>
    </location>
</feature>
<feature type="non-terminal residue">
    <location>
        <position position="1"/>
    </location>
</feature>
<feature type="non-terminal residue">
    <location>
        <position position="56"/>
    </location>
</feature>
<accession>P68127</accession>
<accession>P05606</accession>
<sequence>LAAVSVDCSEYPKPACTMEYRPLCGSDNKTYGNKCNFCNAVVESNGTLTLNHFGKC</sequence>
<organism>
    <name type="scientific">Chrysolophus pictus</name>
    <name type="common">Golden pheasant</name>
    <name type="synonym">Phasianus pictus</name>
    <dbReference type="NCBI Taxonomy" id="9089"/>
    <lineage>
        <taxon>Eukaryota</taxon>
        <taxon>Metazoa</taxon>
        <taxon>Chordata</taxon>
        <taxon>Craniata</taxon>
        <taxon>Vertebrata</taxon>
        <taxon>Euteleostomi</taxon>
        <taxon>Archelosauria</taxon>
        <taxon>Archosauria</taxon>
        <taxon>Dinosauria</taxon>
        <taxon>Saurischia</taxon>
        <taxon>Theropoda</taxon>
        <taxon>Coelurosauria</taxon>
        <taxon>Aves</taxon>
        <taxon>Neognathae</taxon>
        <taxon>Galloanserae</taxon>
        <taxon>Galliformes</taxon>
        <taxon>Phasianidae</taxon>
        <taxon>Phasianinae</taxon>
        <taxon>Chrysolophus</taxon>
    </lineage>
</organism>